<accession>Q1E8D2</accession>
<accession>J3KIU2</accession>
<protein>
    <recommendedName>
        <fullName>Heat-stable 19 kDa antigen</fullName>
    </recommendedName>
    <alternativeName>
        <fullName>CS-AG</fullName>
    </alternativeName>
</protein>
<keyword id="KW-0325">Glycoprotein</keyword>
<keyword id="KW-1185">Reference proteome</keyword>
<keyword id="KW-0964">Secreted</keyword>
<keyword id="KW-0732">Signal</keyword>
<proteinExistence type="inferred from homology"/>
<organism>
    <name type="scientific">Coccidioides immitis (strain RS)</name>
    <name type="common">Valley fever fungus</name>
    <dbReference type="NCBI Taxonomy" id="246410"/>
    <lineage>
        <taxon>Eukaryota</taxon>
        <taxon>Fungi</taxon>
        <taxon>Dikarya</taxon>
        <taxon>Ascomycota</taxon>
        <taxon>Pezizomycotina</taxon>
        <taxon>Eurotiomycetes</taxon>
        <taxon>Eurotiomycetidae</taxon>
        <taxon>Onygenales</taxon>
        <taxon>Onygenaceae</taxon>
        <taxon>Coccidioides</taxon>
    </lineage>
</organism>
<reference key="1">
    <citation type="journal article" date="2009" name="Genome Res.">
        <title>Comparative genomic analyses of the human fungal pathogens Coccidioides and their relatives.</title>
        <authorList>
            <person name="Sharpton T.J."/>
            <person name="Stajich J.E."/>
            <person name="Rounsley S.D."/>
            <person name="Gardner M.J."/>
            <person name="Wortman J.R."/>
            <person name="Jordar V.S."/>
            <person name="Maiti R."/>
            <person name="Kodira C.D."/>
            <person name="Neafsey D.E."/>
            <person name="Zeng Q."/>
            <person name="Hung C.-Y."/>
            <person name="McMahan C."/>
            <person name="Muszewska A."/>
            <person name="Grynberg M."/>
            <person name="Mandel M.A."/>
            <person name="Kellner E.M."/>
            <person name="Barker B.M."/>
            <person name="Galgiani J.N."/>
            <person name="Orbach M.J."/>
            <person name="Kirkland T.N."/>
            <person name="Cole G.T."/>
            <person name="Henn M.R."/>
            <person name="Birren B.W."/>
            <person name="Taylor J.W."/>
        </authorList>
    </citation>
    <scope>NUCLEOTIDE SEQUENCE [LARGE SCALE GENOMIC DNA]</scope>
    <source>
        <strain>RS</strain>
    </source>
</reference>
<reference key="2">
    <citation type="journal article" date="2010" name="Genome Res.">
        <title>Population genomic sequencing of Coccidioides fungi reveals recent hybridization and transposon control.</title>
        <authorList>
            <person name="Neafsey D.E."/>
            <person name="Barker B.M."/>
            <person name="Sharpton T.J."/>
            <person name="Stajich J.E."/>
            <person name="Park D.J."/>
            <person name="Whiston E."/>
            <person name="Hung C.-Y."/>
            <person name="McMahan C."/>
            <person name="White J."/>
            <person name="Sykes S."/>
            <person name="Heiman D."/>
            <person name="Young S."/>
            <person name="Zeng Q."/>
            <person name="Abouelleil A."/>
            <person name="Aftuck L."/>
            <person name="Bessette D."/>
            <person name="Brown A."/>
            <person name="FitzGerald M."/>
            <person name="Lui A."/>
            <person name="Macdonald J.P."/>
            <person name="Priest M."/>
            <person name="Orbach M.J."/>
            <person name="Galgiani J.N."/>
            <person name="Kirkland T.N."/>
            <person name="Cole G.T."/>
            <person name="Birren B.W."/>
            <person name="Henn M.R."/>
            <person name="Taylor J.W."/>
            <person name="Rounsley S.D."/>
        </authorList>
    </citation>
    <scope>GENOME REANNOTATION</scope>
    <source>
        <strain>RS</strain>
    </source>
</reference>
<feature type="signal peptide" evidence="2">
    <location>
        <begin position="1"/>
        <end position="20"/>
    </location>
</feature>
<feature type="chain" id="PRO_0000252284" description="Heat-stable 19 kDa antigen">
    <location>
        <begin position="21"/>
        <end position="146"/>
    </location>
</feature>
<evidence type="ECO:0000250" key="1"/>
<evidence type="ECO:0000255" key="2"/>
<evidence type="ECO:0000305" key="3"/>
<gene>
    <name type="primary">CSA</name>
    <name type="ORF">CIMG_01181</name>
</gene>
<comment type="subcellular location">
    <subcellularLocation>
        <location evidence="1">Secreted</location>
    </subcellularLocation>
</comment>
<comment type="PTM">
    <text evidence="1">Glycosylated.</text>
</comment>
<comment type="similarity">
    <text evidence="3">Belongs to the cerato-platanin family.</text>
</comment>
<dbReference type="EMBL" id="GG704911">
    <property type="protein sequence ID" value="EAS35827.3"/>
    <property type="molecule type" value="Genomic_DNA"/>
</dbReference>
<dbReference type="RefSeq" id="XP_001247410.1">
    <property type="nucleotide sequence ID" value="XM_001247409.2"/>
</dbReference>
<dbReference type="SMR" id="Q1E8D2"/>
<dbReference type="GeneID" id="4565522"/>
<dbReference type="KEGG" id="cim:CIMG_01181"/>
<dbReference type="VEuPathDB" id="FungiDB:CIMG_01181"/>
<dbReference type="InParanoid" id="Q1E8D2"/>
<dbReference type="OMA" id="CHRLEYG"/>
<dbReference type="OrthoDB" id="4898945at2759"/>
<dbReference type="Proteomes" id="UP000001261">
    <property type="component" value="Unassembled WGS sequence"/>
</dbReference>
<dbReference type="GO" id="GO:0005576">
    <property type="term" value="C:extracellular region"/>
    <property type="evidence" value="ECO:0007669"/>
    <property type="project" value="UniProtKB-SubCell"/>
</dbReference>
<dbReference type="CDD" id="cd22778">
    <property type="entry name" value="DPBB_CEPL-like"/>
    <property type="match status" value="1"/>
</dbReference>
<dbReference type="Gene3D" id="2.40.40.10">
    <property type="entry name" value="RlpA-like domain"/>
    <property type="match status" value="1"/>
</dbReference>
<dbReference type="InterPro" id="IPR010829">
    <property type="entry name" value="Cerato-platanin"/>
</dbReference>
<dbReference type="InterPro" id="IPR036908">
    <property type="entry name" value="RlpA-like_sf"/>
</dbReference>
<dbReference type="Pfam" id="PF07249">
    <property type="entry name" value="Cerato-platanin"/>
    <property type="match status" value="1"/>
</dbReference>
<dbReference type="SUPFAM" id="SSF50685">
    <property type="entry name" value="Barwin-like endoglucanases"/>
    <property type="match status" value="1"/>
</dbReference>
<name>AG19_COCIM</name>
<sequence length="146" mass="15563">MKFSLLSAIAAAVFVPFTSATPLASTTDLSYDTHYDDPSLALSGVTCSDGDNGMITKGYNTAGEIPNYPHVGGAFTVETWNSPNCGKCYKVTYNAKTIFLTAIDHSNSGFNIAKKSMDVLTNGRAEELGRIKVTYEEVASSLCGLK</sequence>